<keyword id="KW-0150">Chloroplast</keyword>
<keyword id="KW-0240">DNA-directed RNA polymerase</keyword>
<keyword id="KW-0460">Magnesium</keyword>
<keyword id="KW-0479">Metal-binding</keyword>
<keyword id="KW-0548">Nucleotidyltransferase</keyword>
<keyword id="KW-0934">Plastid</keyword>
<keyword id="KW-0804">Transcription</keyword>
<keyword id="KW-0808">Transferase</keyword>
<keyword id="KW-0862">Zinc</keyword>
<geneLocation type="chloroplast"/>
<dbReference type="EC" id="2.7.7.6" evidence="1"/>
<dbReference type="EMBL" id="Z67753">
    <property type="protein sequence ID" value="CAA91745.1"/>
    <property type="molecule type" value="Genomic_DNA"/>
</dbReference>
<dbReference type="PIR" id="S78372">
    <property type="entry name" value="S78372"/>
</dbReference>
<dbReference type="RefSeq" id="NP_043713.1">
    <property type="nucleotide sequence ID" value="NC_001713.1"/>
</dbReference>
<dbReference type="SMR" id="P49467"/>
<dbReference type="GeneID" id="801764"/>
<dbReference type="GO" id="GO:0009507">
    <property type="term" value="C:chloroplast"/>
    <property type="evidence" value="ECO:0007669"/>
    <property type="project" value="UniProtKB-SubCell"/>
</dbReference>
<dbReference type="GO" id="GO:0000428">
    <property type="term" value="C:DNA-directed RNA polymerase complex"/>
    <property type="evidence" value="ECO:0007669"/>
    <property type="project" value="UniProtKB-KW"/>
</dbReference>
<dbReference type="GO" id="GO:0005739">
    <property type="term" value="C:mitochondrion"/>
    <property type="evidence" value="ECO:0007669"/>
    <property type="project" value="GOC"/>
</dbReference>
<dbReference type="GO" id="GO:0003677">
    <property type="term" value="F:DNA binding"/>
    <property type="evidence" value="ECO:0007669"/>
    <property type="project" value="UniProtKB-UniRule"/>
</dbReference>
<dbReference type="GO" id="GO:0003899">
    <property type="term" value="F:DNA-directed RNA polymerase activity"/>
    <property type="evidence" value="ECO:0007669"/>
    <property type="project" value="UniProtKB-UniRule"/>
</dbReference>
<dbReference type="GO" id="GO:0000287">
    <property type="term" value="F:magnesium ion binding"/>
    <property type="evidence" value="ECO:0007669"/>
    <property type="project" value="UniProtKB-UniRule"/>
</dbReference>
<dbReference type="GO" id="GO:0008270">
    <property type="term" value="F:zinc ion binding"/>
    <property type="evidence" value="ECO:0007669"/>
    <property type="project" value="UniProtKB-UniRule"/>
</dbReference>
<dbReference type="GO" id="GO:0006351">
    <property type="term" value="P:DNA-templated transcription"/>
    <property type="evidence" value="ECO:0007669"/>
    <property type="project" value="UniProtKB-UniRule"/>
</dbReference>
<dbReference type="Gene3D" id="1.10.40.90">
    <property type="match status" value="1"/>
</dbReference>
<dbReference type="Gene3D" id="2.40.40.20">
    <property type="match status" value="1"/>
</dbReference>
<dbReference type="Gene3D" id="4.10.860.120">
    <property type="entry name" value="RNA polymerase II, clamp domain"/>
    <property type="match status" value="1"/>
</dbReference>
<dbReference type="Gene3D" id="1.10.274.100">
    <property type="entry name" value="RNA polymerase Rpb1, domain 3"/>
    <property type="match status" value="1"/>
</dbReference>
<dbReference type="HAMAP" id="MF_01323">
    <property type="entry name" value="RNApol_bact_RpoC1"/>
    <property type="match status" value="1"/>
</dbReference>
<dbReference type="InterPro" id="IPR045867">
    <property type="entry name" value="DNA-dir_RpoC_beta_prime"/>
</dbReference>
<dbReference type="InterPro" id="IPR000722">
    <property type="entry name" value="RNA_pol_asu"/>
</dbReference>
<dbReference type="InterPro" id="IPR006592">
    <property type="entry name" value="RNA_pol_N"/>
</dbReference>
<dbReference type="InterPro" id="IPR007080">
    <property type="entry name" value="RNA_pol_Rpb1_1"/>
</dbReference>
<dbReference type="InterPro" id="IPR007066">
    <property type="entry name" value="RNA_pol_Rpb1_3"/>
</dbReference>
<dbReference type="InterPro" id="IPR042102">
    <property type="entry name" value="RNA_pol_Rpb1_3_sf"/>
</dbReference>
<dbReference type="InterPro" id="IPR044893">
    <property type="entry name" value="RNA_pol_Rpb1_clamp_domain"/>
</dbReference>
<dbReference type="InterPro" id="IPR034678">
    <property type="entry name" value="RNApol_RpoC1"/>
</dbReference>
<dbReference type="PANTHER" id="PTHR19376">
    <property type="entry name" value="DNA-DIRECTED RNA POLYMERASE"/>
    <property type="match status" value="1"/>
</dbReference>
<dbReference type="PANTHER" id="PTHR19376:SF54">
    <property type="entry name" value="DNA-DIRECTED RNA POLYMERASE SUBUNIT BETA"/>
    <property type="match status" value="1"/>
</dbReference>
<dbReference type="Pfam" id="PF04997">
    <property type="entry name" value="RNA_pol_Rpb1_1"/>
    <property type="match status" value="1"/>
</dbReference>
<dbReference type="Pfam" id="PF00623">
    <property type="entry name" value="RNA_pol_Rpb1_2"/>
    <property type="match status" value="2"/>
</dbReference>
<dbReference type="Pfam" id="PF04983">
    <property type="entry name" value="RNA_pol_Rpb1_3"/>
    <property type="match status" value="1"/>
</dbReference>
<dbReference type="SMART" id="SM00663">
    <property type="entry name" value="RPOLA_N"/>
    <property type="match status" value="1"/>
</dbReference>
<dbReference type="SUPFAM" id="SSF64484">
    <property type="entry name" value="beta and beta-prime subunits of DNA dependent RNA-polymerase"/>
    <property type="match status" value="1"/>
</dbReference>
<feature type="chain" id="PRO_0000067884" description="DNA-directed RNA polymerase subunit beta'">
    <location>
        <begin position="1"/>
        <end position="843"/>
    </location>
</feature>
<feature type="binding site" evidence="1">
    <location>
        <position position="70"/>
    </location>
    <ligand>
        <name>Zn(2+)</name>
        <dbReference type="ChEBI" id="CHEBI:29105"/>
    </ligand>
</feature>
<feature type="binding site" evidence="1">
    <location>
        <position position="72"/>
    </location>
    <ligand>
        <name>Zn(2+)</name>
        <dbReference type="ChEBI" id="CHEBI:29105"/>
    </ligand>
</feature>
<feature type="binding site" evidence="1">
    <location>
        <position position="85"/>
    </location>
    <ligand>
        <name>Zn(2+)</name>
        <dbReference type="ChEBI" id="CHEBI:29105"/>
    </ligand>
</feature>
<feature type="binding site" evidence="1">
    <location>
        <position position="88"/>
    </location>
    <ligand>
        <name>Zn(2+)</name>
        <dbReference type="ChEBI" id="CHEBI:29105"/>
    </ligand>
</feature>
<feature type="binding site" evidence="1">
    <location>
        <position position="686"/>
    </location>
    <ligand>
        <name>Mg(2+)</name>
        <dbReference type="ChEBI" id="CHEBI:18420"/>
    </ligand>
</feature>
<feature type="binding site" evidence="1">
    <location>
        <position position="688"/>
    </location>
    <ligand>
        <name>Mg(2+)</name>
        <dbReference type="ChEBI" id="CHEBI:18420"/>
    </ligand>
</feature>
<feature type="binding site" evidence="1">
    <location>
        <position position="690"/>
    </location>
    <ligand>
        <name>Mg(2+)</name>
        <dbReference type="ChEBI" id="CHEBI:18420"/>
    </ligand>
</feature>
<evidence type="ECO:0000255" key="1">
    <source>
        <dbReference type="HAMAP-Rule" id="MF_01323"/>
    </source>
</evidence>
<comment type="function">
    <text evidence="1">DNA-dependent RNA polymerase catalyzes the transcription of DNA into RNA using the four ribonucleoside triphosphates as substrates.</text>
</comment>
<comment type="catalytic activity">
    <reaction evidence="1">
        <text>RNA(n) + a ribonucleoside 5'-triphosphate = RNA(n+1) + diphosphate</text>
        <dbReference type="Rhea" id="RHEA:21248"/>
        <dbReference type="Rhea" id="RHEA-COMP:14527"/>
        <dbReference type="Rhea" id="RHEA-COMP:17342"/>
        <dbReference type="ChEBI" id="CHEBI:33019"/>
        <dbReference type="ChEBI" id="CHEBI:61557"/>
        <dbReference type="ChEBI" id="CHEBI:140395"/>
        <dbReference type="EC" id="2.7.7.6"/>
    </reaction>
</comment>
<comment type="cofactor">
    <cofactor evidence="1">
        <name>Mg(2+)</name>
        <dbReference type="ChEBI" id="CHEBI:18420"/>
    </cofactor>
    <text evidence="1">Binds 1 Mg(2+) ion per subunit.</text>
</comment>
<comment type="cofactor">
    <cofactor evidence="1">
        <name>Zn(2+)</name>
        <dbReference type="ChEBI" id="CHEBI:29105"/>
    </cofactor>
    <text evidence="1">Binds 1 Zn(2+) ion per subunit.</text>
</comment>
<comment type="subunit">
    <text evidence="1">In plastids the minimal PEP RNA polymerase catalytic core is composed of four subunits: alpha, beta, beta', and beta''. When a (nuclear-encoded) sigma factor is associated with the core the holoenzyme is formed, which can initiate transcription.</text>
</comment>
<comment type="subcellular location">
    <subcellularLocation>
        <location evidence="1">Plastid</location>
        <location evidence="1">Chloroplast</location>
    </subcellularLocation>
</comment>
<comment type="similarity">
    <text evidence="1">Belongs to the RNA polymerase beta' chain family. RpoC1 subfamily.</text>
</comment>
<accession>P49467</accession>
<name>RPOC1_TRICV</name>
<reference key="1">
    <citation type="journal article" date="1995" name="Plant Mol. Biol. Rep.">
        <title>The chloroplast genome of a chlorophyll a+c-containing alga, Odontella sinensis.</title>
        <authorList>
            <person name="Kowallik K.V."/>
            <person name="Stoebe B."/>
            <person name="Schaffran I."/>
            <person name="Kroth-Pancic P."/>
            <person name="Freier U."/>
        </authorList>
    </citation>
    <scope>NUCLEOTIDE SEQUENCE [LARGE SCALE GENOMIC DNA]</scope>
</reference>
<organism>
    <name type="scientific">Trieres chinensis</name>
    <name type="common">Marine centric diatom</name>
    <name type="synonym">Odontella sinensis</name>
    <dbReference type="NCBI Taxonomy" id="1514140"/>
    <lineage>
        <taxon>Eukaryota</taxon>
        <taxon>Sar</taxon>
        <taxon>Stramenopiles</taxon>
        <taxon>Ochrophyta</taxon>
        <taxon>Bacillariophyta</taxon>
        <taxon>Mediophyceae</taxon>
        <taxon>Biddulphiophycidae</taxon>
        <taxon>Eupodiscales</taxon>
        <taxon>Parodontellaceae</taxon>
        <taxon>Trieres</taxon>
    </lineage>
</organism>
<proteinExistence type="inferred from homology"/>
<gene>
    <name evidence="1" type="primary">rpoC1</name>
</gene>
<protein>
    <recommendedName>
        <fullName evidence="1">DNA-directed RNA polymerase subunit beta'</fullName>
        <ecNumber evidence="1">2.7.7.6</ecNumber>
    </recommendedName>
    <alternativeName>
        <fullName evidence="1">PEP</fullName>
    </alternativeName>
    <alternativeName>
        <fullName evidence="1">Plastid-encoded RNA polymerase subunit beta'</fullName>
        <shortName evidence="1">RNA polymerase subunit beta'</shortName>
    </alternativeName>
</protein>
<sequence>MLQSEKEFDYINIKLASPLRILQWSYRRLPNGQFIGEVQKSETINYRTFKPEMDGLFCERIFGPSRSFECACGKYKLIRYEGLICERCGVELTESRVRRHRMGHINLIYPVAHVWYTNSRPNYMALLLEVEQCEKNLNTSWQILRFSLPGIYDQVLRPILLSDHWPDSSIDEYLKTICKDFSTIALESSNIWAKKSKAWYQKIFEIYQELLYAKIETIYQFIEFIDNIDLTKQPTSVNFIFDYLENEKILDLMNPISLTNEITASQDPAQIDLVDPSRDIFLFLNTFPKKQHKELFRKLIRKSNTVKSLDDRIKRIKLASLAYFIAEDEISYYGLHWDLQQYRRSRELGFTAYPLKPEPKPKLQNRRYNTPKYLLRMTPTYLIGAVLIKKELEDLDIIKEIQRTRKFIVICSKILHKEKPIYHFLRWFRKWELQRAYKLRDQAIKRIRILENLLATGSNPAWMILTILPVIPPALRPMIQLEGGRFATSDLNELYRRIITRNNRLLRLLEIDAPQLIIRNEKRMLQEAVDTLIDNGKRGKIALSANNRPLKSLSDIIKGKHGRFRQNLLGKRVDYSGRSVIVVGPSLRLNECGLPYEMALELFQPFLIREMINQGLASNMKIARNLIEQNEAIIDPVLEKVLSNHPIFLNRAPTLHRLGIQAFEPILVQGRAIKLHPLVCSAFNADFDGDQMAVHIPLSLESQSECYMLMLAPYNFLSPANGEPIILPSQDMVLGCYYLTVSNIKGLLGSNQYFASLEDVLLAYNQDKIELHTAIWIRYTDNYIEPLNFKKQIQLNDASYIEIYENMQIRRDKDGNKIVQYLQTTTGRVIFNYTVQTTLNLLS</sequence>